<protein>
    <recommendedName>
        <fullName>Protein TraJ</fullName>
    </recommendedName>
</protein>
<name>TRAJ5_ECOLX</name>
<accession>P17907</accession>
<organism>
    <name type="scientific">Escherichia coli</name>
    <dbReference type="NCBI Taxonomy" id="562"/>
    <lineage>
        <taxon>Bacteria</taxon>
        <taxon>Pseudomonadati</taxon>
        <taxon>Pseudomonadota</taxon>
        <taxon>Gammaproteobacteria</taxon>
        <taxon>Enterobacterales</taxon>
        <taxon>Enterobacteriaceae</taxon>
        <taxon>Escherichia</taxon>
    </lineage>
</organism>
<dbReference type="EMBL" id="X54458">
    <property type="protein sequence ID" value="CAA38331.1"/>
    <property type="status" value="ALT_FRAME"/>
    <property type="molecule type" value="Genomic_DNA"/>
</dbReference>
<dbReference type="EMBL" id="U67194">
    <property type="protein sequence ID" value="AAC64478.2"/>
    <property type="molecule type" value="Genomic_DNA"/>
</dbReference>
<dbReference type="EMBL" id="M25422">
    <property type="protein sequence ID" value="AAA26085.2"/>
    <property type="status" value="ALT_SEQ"/>
    <property type="molecule type" value="Genomic_DNA"/>
</dbReference>
<dbReference type="PIR" id="S22996">
    <property type="entry name" value="S22996"/>
</dbReference>
<dbReference type="RefSeq" id="WP_000426567.1">
    <property type="nucleotide sequence ID" value="NZ_MW574946.1"/>
</dbReference>
<dbReference type="SMR" id="P17907"/>
<dbReference type="GeneID" id="93083051"/>
<dbReference type="GO" id="GO:0005737">
    <property type="term" value="C:cytoplasm"/>
    <property type="evidence" value="ECO:0007669"/>
    <property type="project" value="UniProtKB-SubCell"/>
</dbReference>
<dbReference type="InterPro" id="IPR053842">
    <property type="entry name" value="NikA-like"/>
</dbReference>
<dbReference type="NCBIfam" id="NF010451">
    <property type="entry name" value="PRK13877.1"/>
    <property type="match status" value="1"/>
</dbReference>
<dbReference type="Pfam" id="PF21983">
    <property type="entry name" value="NikA-like"/>
    <property type="match status" value="1"/>
</dbReference>
<sequence>MENDEKEHGRRRRQHLRVPVFPEEKDEIEANAKRAGVSVARYLRDVGQGYQIKGVMDYQHVRELVRVNGDLGRLGGLLKLWLTDDVRTLQFGEATILALLGRIEATQDEMSRIMKAVVQPRAEP</sequence>
<reference key="1">
    <citation type="journal article" date="1991" name="DNA Seq.">
        <title>Nucleotide sequence and organization of genes flanking the transfer origin of promiscuous plasmid RP4.</title>
        <authorList>
            <person name="Ziegelin G."/>
            <person name="Pansegrau W."/>
            <person name="Strack B."/>
            <person name="Balzer D."/>
            <person name="Kroeger M."/>
            <person name="Kruft V."/>
            <person name="Lanka E."/>
        </authorList>
    </citation>
    <scope>NUCLEOTIDE SEQUENCE [GENOMIC DNA]</scope>
    <source>
        <strain>ATCC 33694 / HB101</strain>
    </source>
</reference>
<reference key="2">
    <citation type="journal article" date="1998" name="J. Mol. Biol.">
        <title>Complete sequence of the IncPbeta plasmid R751: implications for evolution and organisation of the IncP backbone.</title>
        <authorList>
            <person name="Thorsted P.B."/>
            <person name="Macartney D.P."/>
            <person name="Akhtar P."/>
            <person name="Haines A.S."/>
            <person name="Ali N."/>
            <person name="Davidson P."/>
            <person name="Stafford T."/>
            <person name="Pocklington M.J."/>
            <person name="Pansegrau W."/>
            <person name="Wilkins B.M."/>
            <person name="Lanka E."/>
            <person name="Thomas C.M."/>
        </authorList>
    </citation>
    <scope>NUCLEOTIDE SEQUENCE [GENOMIC DNA]</scope>
</reference>
<reference key="3">
    <citation type="submission" date="2005-04" db="EMBL/GenBank/DDBJ databases">
        <authorList>
            <person name="Haines A.S."/>
            <person name="Cheung M."/>
            <person name="Thomas C.M."/>
        </authorList>
    </citation>
    <scope>SEQUENCE REVISION</scope>
</reference>
<reference key="4">
    <citation type="journal article" date="1989" name="Proc. Natl. Acad. Sci. U.S.A.">
        <title>Conjugative transfer of promiscuous IncP plasmids: interaction of plasmid-encoded products with the transfer origin.</title>
        <authorList>
            <person name="Fuerste J.P."/>
            <person name="Pansegrau W."/>
            <person name="Ziegelin G."/>
            <person name="Kroeger M."/>
            <person name="Lanka E."/>
        </authorList>
    </citation>
    <scope>NUCLEOTIDE SEQUENCE [GENOMIC DNA] OF 1-9</scope>
</reference>
<feature type="chain" id="PRO_0000068460" description="Protein TraJ">
    <location>
        <begin position="1"/>
        <end position="124"/>
    </location>
</feature>
<comment type="function">
    <text>This protein is essential for positively regulating the expression of transfer genes that are involved in the conjugal transfer of DNA between bacterial cells.</text>
</comment>
<comment type="subcellular location">
    <subcellularLocation>
        <location evidence="1">Cytoplasm</location>
    </subcellularLocation>
</comment>
<comment type="sequence caution" evidence="2">
    <conflict type="erroneous translation">
        <sequence resource="EMBL-CDS" id="AAA26085"/>
    </conflict>
    <text>Wrong choice of frame.</text>
</comment>
<comment type="sequence caution" evidence="2">
    <conflict type="frameshift">
        <sequence resource="EMBL-CDS" id="CAA38331"/>
    </conflict>
</comment>
<geneLocation type="plasmid">
    <name>IncP-beta R751</name>
</geneLocation>
<proteinExistence type="inferred from homology"/>
<evidence type="ECO:0000250" key="1"/>
<evidence type="ECO:0000305" key="2"/>
<keyword id="KW-0010">Activator</keyword>
<keyword id="KW-0184">Conjugation</keyword>
<keyword id="KW-0963">Cytoplasm</keyword>
<keyword id="KW-0614">Plasmid</keyword>
<keyword id="KW-0804">Transcription</keyword>
<keyword id="KW-0805">Transcription regulation</keyword>
<gene>
    <name type="primary">traJ</name>
</gene>